<sequence length="816" mass="91548">MLSWRHLVFWAMLVMATLSAARPAPTLPEQVSPKAKVEVESYSAHHGDLLQLRCRLRDDVHSINWEKDGVQLAETNRTRITGAEVEVRDAVQEDSGLYACMTHRPSGTETTFFAVNVSDRIPSVEDDDDDDEKSSSEEKEAENSKPNPVAPFWAHPEKMEKKLHAVPAAKTVKFRCPAGGTPSPTLRWLKNGKEFKPDHRIGGYKVRYQTWSIIMDSVVPSDKGPYTCLVENNYGSINHTYQLDVVERSPHRPILQAGLPANQTVPVGSNVDFVCKVYSDPQPHIQWLKHVTVNGSKYGSDGLPLVQVLKAAGVNTTDKEMEVLHLRNVSFEDAWEYTCLAGNSIGISHHSAWLTVVEAISENPVIMTSPLYLEIIIYCTGAFLISCMLVTVIIYKMKNTTKKTDFNSQPAVHKLAKSFPLQRQVSADSSSSMSSGVMLVRPSRLSSSGSPMLTGVSEYELPEDPRWEFSRDRLILGKPLGEGCFGQVVMGEAIGLDKEKPNRVTKVAVKMLKSDATEKDLSDLISEMEMMKMIGKHKNIINLLGACTQDGPLYVIVEYASKGNLREYLRARRPPGMEYCYNPIHVSKDMLSFKDLVSCAYQVARGMEYLASKKCIHRDLAARNVLVTEDSVMKIADFGLARDIHHIDYYKKTTNGRLPVKWMAPEALFDRIYTHQSDVWSFGVLLWEIFTLGGSPYPGVPVEELFKLLKEGHRMDKPGNCTNELYMMMRDCWHAVPSQRPTFKQLVEDLDRIVAMTSNQEYLDLSMPVDQYSPGFPDTRSSTCSSGEDSVFSHDPLPDEPCLPKYQHANGGLKKR</sequence>
<organism>
    <name type="scientific">Pleurodeles waltl</name>
    <name type="common">Iberian ribbed newt</name>
    <dbReference type="NCBI Taxonomy" id="8319"/>
    <lineage>
        <taxon>Eukaryota</taxon>
        <taxon>Metazoa</taxon>
        <taxon>Chordata</taxon>
        <taxon>Craniata</taxon>
        <taxon>Vertebrata</taxon>
        <taxon>Euteleostomi</taxon>
        <taxon>Amphibia</taxon>
        <taxon>Batrachia</taxon>
        <taxon>Caudata</taxon>
        <taxon>Salamandroidea</taxon>
        <taxon>Salamandridae</taxon>
        <taxon>Pleurodelinae</taxon>
        <taxon>Pleurodeles</taxon>
    </lineage>
</organism>
<gene>
    <name type="primary">FGFR1</name>
</gene>
<reference key="1">
    <citation type="journal article" date="1992" name="Development">
        <title>Differential expression and regulation of two distinct fibroblast growth factor receptors during early development of the urodele amphibian Pleurodeles waltl.</title>
        <authorList>
            <person name="Shi D.-L."/>
            <person name="Feige J.-J."/>
            <person name="Riou J.-F."/>
            <person name="DeSimone D.W."/>
            <person name="Boucaut J.-C."/>
        </authorList>
    </citation>
    <scope>NUCLEOTIDE SEQUENCE [MRNA]</scope>
    <scope>DEVELOPMENTAL STAGE</scope>
    <source>
        <tissue>Embryo</tissue>
    </source>
</reference>
<comment type="function">
    <text evidence="1">Tyrosine-protein kinase that acts as a cell-surface receptor for fibroblast growth factors and plays an essential role in the regulation of embryonic development, cell proliferation, differentiation and migration. Required for normal mesoderm patterning and normal skeletogenesis. Phosphorylates PLCG1, FRS2, GAB1 and SHB. Ligand binding leads to the activation of several signaling cascades. Activation of PLCG1 leads to the production of the cellular signaling molecules diacylglycerol and inositol-1,4,5-trisphosphate. Phosphorylation of FRS2 triggers recruitment of GRB2, GAB1, PIK3R1 and SOS1, and mediates activation of RAS, MAPK1/ERK2, MAPK3/ERK1 and the MAP kinase signaling pathway, as well as of the AKT1 signaling pathway. Promotes phosphorylation of SHC1, STAT1 and PTPN11/SHP2. In the nucleus, enhances RPS6KA1 and CREB1 activity and contributes to the regulation of transcription. FGFR1 signaling is down-regulated by ubiquitination, internalization and degradation (By similarity).</text>
</comment>
<comment type="catalytic activity">
    <reaction evidence="5">
        <text>L-tyrosyl-[protein] + ATP = O-phospho-L-tyrosyl-[protein] + ADP + H(+)</text>
        <dbReference type="Rhea" id="RHEA:10596"/>
        <dbReference type="Rhea" id="RHEA-COMP:10136"/>
        <dbReference type="Rhea" id="RHEA-COMP:20101"/>
        <dbReference type="ChEBI" id="CHEBI:15378"/>
        <dbReference type="ChEBI" id="CHEBI:30616"/>
        <dbReference type="ChEBI" id="CHEBI:46858"/>
        <dbReference type="ChEBI" id="CHEBI:61978"/>
        <dbReference type="ChEBI" id="CHEBI:456216"/>
        <dbReference type="EC" id="2.7.10.1"/>
    </reaction>
</comment>
<comment type="activity regulation">
    <text evidence="1">Present in an inactive conformation in the absence of bound ligand. Ligand binding leads to dimerization and activation by sequential autophosphorylation on tyrosine residues (By similarity).</text>
</comment>
<comment type="subunit">
    <text evidence="1">Monomer. Homodimer after ligand binding (By similarity).</text>
</comment>
<comment type="subcellular location">
    <subcellularLocation>
        <location evidence="1">Cell membrane</location>
        <topology evidence="1">Single-pass type I membrane protein</topology>
    </subcellularLocation>
    <subcellularLocation>
        <location evidence="1">Nucleus</location>
    </subcellularLocation>
    <subcellularLocation>
        <location evidence="1">Cytoplasm</location>
        <location evidence="1">Cytosol</location>
    </subcellularLocation>
    <subcellularLocation>
        <location evidence="1">Cytoplasmic vesicle</location>
    </subcellularLocation>
    <text evidence="1">After ligand binding, both receptor and ligand are rapidly internalized. Can translocate to the nucleus after internalization, or by translocation from the endoplasmic reticulum or Golgi apparatus to the cytosol, and from there to the nucleus (By similarity).</text>
</comment>
<comment type="developmental stage">
    <text evidence="7">Maternally derived transcript whose level of expression remains constant during early developmental stages or early gastrula. At tail-bud stage, transcripts are localized primarily to the neural and mesodermal tissues.</text>
</comment>
<comment type="domain">
    <text evidence="1">The second and third Ig-like domains directly interact with fibroblast growth factors (FGF) and heparan sulfate proteoglycans. Isoforms lacking the first Ig-like domain have higher affinity for fibroblast growth factors (FGF) and heparan sulfate proteoglycans than isoforms with all three Ig-like domains (By similarity).</text>
</comment>
<comment type="PTM">
    <text evidence="1">Autophosphorylated. Binding of FGF family members together with heparan sulfate proteoglycan or heparin promotes receptor dimerization and autophosphorylation on tyrosine residues. Autophosphorylation occurs in trans between the two FGFR molecules present in the dimer and proceeds in a highly ordered manner. Phosphotyrosine residues provide docking sites for interacting proteins and so are crucial for FGFR1 function and its regulation (By similarity).</text>
</comment>
<comment type="PTM">
    <text evidence="1">Ubiquitinated. FGFR1 is rapidly ubiquitinated after autophosphorylation, leading to internalization and degradation (By similarity).</text>
</comment>
<comment type="PTM">
    <text evidence="1">N-glycosylated in the endoplasmic reticulum. The N-glycan chains undergo further maturation to an Endo H-resistant form in the Golgi apparatus (By similarity).</text>
</comment>
<comment type="similarity">
    <text evidence="4">Belongs to the protein kinase superfamily. Tyr protein kinase family. Fibroblast growth factor receptor subfamily.</text>
</comment>
<proteinExistence type="evidence at transcript level"/>
<keyword id="KW-0067">ATP-binding</keyword>
<keyword id="KW-1003">Cell membrane</keyword>
<keyword id="KW-0963">Cytoplasm</keyword>
<keyword id="KW-0968">Cytoplasmic vesicle</keyword>
<keyword id="KW-1015">Disulfide bond</keyword>
<keyword id="KW-0325">Glycoprotein</keyword>
<keyword id="KW-0393">Immunoglobulin domain</keyword>
<keyword id="KW-0418">Kinase</keyword>
<keyword id="KW-0472">Membrane</keyword>
<keyword id="KW-0547">Nucleotide-binding</keyword>
<keyword id="KW-0539">Nucleus</keyword>
<keyword id="KW-0597">Phosphoprotein</keyword>
<keyword id="KW-0675">Receptor</keyword>
<keyword id="KW-0677">Repeat</keyword>
<keyword id="KW-0732">Signal</keyword>
<keyword id="KW-0808">Transferase</keyword>
<keyword id="KW-0812">Transmembrane</keyword>
<keyword id="KW-1133">Transmembrane helix</keyword>
<keyword id="KW-0829">Tyrosine-protein kinase</keyword>
<keyword id="KW-0832">Ubl conjugation</keyword>
<protein>
    <recommendedName>
        <fullName>Fibroblast growth factor receptor 1</fullName>
        <shortName>FGFR-1</shortName>
        <ecNumber>2.7.10.1</ecNumber>
    </recommendedName>
    <alternativeName>
        <fullName>PFR1</fullName>
    </alternativeName>
</protein>
<evidence type="ECO:0000250" key="1"/>
<evidence type="ECO:0000255" key="2"/>
<evidence type="ECO:0000255" key="3">
    <source>
        <dbReference type="PROSITE-ProRule" id="PRU00114"/>
    </source>
</evidence>
<evidence type="ECO:0000255" key="4">
    <source>
        <dbReference type="PROSITE-ProRule" id="PRU00159"/>
    </source>
</evidence>
<evidence type="ECO:0000255" key="5">
    <source>
        <dbReference type="PROSITE-ProRule" id="PRU10028"/>
    </source>
</evidence>
<evidence type="ECO:0000256" key="6">
    <source>
        <dbReference type="SAM" id="MobiDB-lite"/>
    </source>
</evidence>
<evidence type="ECO:0000269" key="7">
    <source>
    </source>
</evidence>
<accession>Q91285</accession>
<dbReference type="EC" id="2.7.10.1"/>
<dbReference type="EMBL" id="X59380">
    <property type="protein sequence ID" value="CAA42023.1"/>
    <property type="molecule type" value="mRNA"/>
</dbReference>
<dbReference type="PIR" id="A49151">
    <property type="entry name" value="A49151"/>
</dbReference>
<dbReference type="SMR" id="Q91285"/>
<dbReference type="GlyCosmos" id="Q91285">
    <property type="glycosylation" value="7 sites, No reported glycans"/>
</dbReference>
<dbReference type="GO" id="GO:0031410">
    <property type="term" value="C:cytoplasmic vesicle"/>
    <property type="evidence" value="ECO:0007669"/>
    <property type="project" value="UniProtKB-KW"/>
</dbReference>
<dbReference type="GO" id="GO:0005829">
    <property type="term" value="C:cytosol"/>
    <property type="evidence" value="ECO:0007669"/>
    <property type="project" value="UniProtKB-SubCell"/>
</dbReference>
<dbReference type="GO" id="GO:0005634">
    <property type="term" value="C:nucleus"/>
    <property type="evidence" value="ECO:0007669"/>
    <property type="project" value="UniProtKB-SubCell"/>
</dbReference>
<dbReference type="GO" id="GO:0005886">
    <property type="term" value="C:plasma membrane"/>
    <property type="evidence" value="ECO:0007669"/>
    <property type="project" value="UniProtKB-SubCell"/>
</dbReference>
<dbReference type="GO" id="GO:0043235">
    <property type="term" value="C:receptor complex"/>
    <property type="evidence" value="ECO:0007669"/>
    <property type="project" value="TreeGrafter"/>
</dbReference>
<dbReference type="GO" id="GO:0005524">
    <property type="term" value="F:ATP binding"/>
    <property type="evidence" value="ECO:0007669"/>
    <property type="project" value="UniProtKB-KW"/>
</dbReference>
<dbReference type="GO" id="GO:0017134">
    <property type="term" value="F:fibroblast growth factor binding"/>
    <property type="evidence" value="ECO:0007669"/>
    <property type="project" value="TreeGrafter"/>
</dbReference>
<dbReference type="GO" id="GO:0005007">
    <property type="term" value="F:fibroblast growth factor receptor activity"/>
    <property type="evidence" value="ECO:0000250"/>
    <property type="project" value="UniProtKB"/>
</dbReference>
<dbReference type="GO" id="GO:0048513">
    <property type="term" value="P:animal organ development"/>
    <property type="evidence" value="ECO:0007669"/>
    <property type="project" value="UniProtKB-ARBA"/>
</dbReference>
<dbReference type="GO" id="GO:0030154">
    <property type="term" value="P:cell differentiation"/>
    <property type="evidence" value="ECO:0007669"/>
    <property type="project" value="UniProtKB-ARBA"/>
</dbReference>
<dbReference type="GO" id="GO:0045597">
    <property type="term" value="P:positive regulation of cell differentiation"/>
    <property type="evidence" value="ECO:0007669"/>
    <property type="project" value="TreeGrafter"/>
</dbReference>
<dbReference type="GO" id="GO:0008284">
    <property type="term" value="P:positive regulation of cell population proliferation"/>
    <property type="evidence" value="ECO:0007669"/>
    <property type="project" value="InterPro"/>
</dbReference>
<dbReference type="GO" id="GO:0010604">
    <property type="term" value="P:positive regulation of macromolecule metabolic process"/>
    <property type="evidence" value="ECO:0007669"/>
    <property type="project" value="UniProtKB-ARBA"/>
</dbReference>
<dbReference type="GO" id="GO:0080090">
    <property type="term" value="P:regulation of primary metabolic process"/>
    <property type="evidence" value="ECO:0007669"/>
    <property type="project" value="UniProtKB-ARBA"/>
</dbReference>
<dbReference type="CDD" id="cd05857">
    <property type="entry name" value="IgI_2_FGFR"/>
    <property type="match status" value="1"/>
</dbReference>
<dbReference type="CDD" id="cd05098">
    <property type="entry name" value="PTKc_FGFR1"/>
    <property type="match status" value="1"/>
</dbReference>
<dbReference type="FunFam" id="1.10.510.10:FF:000007">
    <property type="entry name" value="Fibroblast growth factor receptor"/>
    <property type="match status" value="1"/>
</dbReference>
<dbReference type="FunFam" id="2.60.40.10:FF:000016">
    <property type="entry name" value="Fibroblast growth factor receptor"/>
    <property type="match status" value="1"/>
</dbReference>
<dbReference type="FunFam" id="2.60.40.10:FF:000020">
    <property type="entry name" value="Fibroblast growth factor receptor"/>
    <property type="match status" value="1"/>
</dbReference>
<dbReference type="FunFam" id="2.60.40.10:FF:000408">
    <property type="entry name" value="Fibroblast growth factor receptor"/>
    <property type="match status" value="1"/>
</dbReference>
<dbReference type="FunFam" id="3.30.200.20:FF:000011">
    <property type="entry name" value="Fibroblast growth factor receptor"/>
    <property type="match status" value="1"/>
</dbReference>
<dbReference type="Gene3D" id="2.60.40.10">
    <property type="entry name" value="Immunoglobulins"/>
    <property type="match status" value="3"/>
</dbReference>
<dbReference type="Gene3D" id="3.30.200.20">
    <property type="entry name" value="Phosphorylase Kinase, domain 1"/>
    <property type="match status" value="1"/>
</dbReference>
<dbReference type="Gene3D" id="1.10.510.10">
    <property type="entry name" value="Transferase(Phosphotransferase) domain 1"/>
    <property type="match status" value="1"/>
</dbReference>
<dbReference type="InterPro" id="IPR028174">
    <property type="entry name" value="FGF_rcpt_1"/>
</dbReference>
<dbReference type="InterPro" id="IPR016248">
    <property type="entry name" value="FGF_rcpt_fam"/>
</dbReference>
<dbReference type="InterPro" id="IPR007110">
    <property type="entry name" value="Ig-like_dom"/>
</dbReference>
<dbReference type="InterPro" id="IPR036179">
    <property type="entry name" value="Ig-like_dom_sf"/>
</dbReference>
<dbReference type="InterPro" id="IPR013783">
    <property type="entry name" value="Ig-like_fold"/>
</dbReference>
<dbReference type="InterPro" id="IPR013098">
    <property type="entry name" value="Ig_I-set"/>
</dbReference>
<dbReference type="InterPro" id="IPR003599">
    <property type="entry name" value="Ig_sub"/>
</dbReference>
<dbReference type="InterPro" id="IPR003598">
    <property type="entry name" value="Ig_sub2"/>
</dbReference>
<dbReference type="InterPro" id="IPR013151">
    <property type="entry name" value="Immunoglobulin_dom"/>
</dbReference>
<dbReference type="InterPro" id="IPR011009">
    <property type="entry name" value="Kinase-like_dom_sf"/>
</dbReference>
<dbReference type="InterPro" id="IPR000719">
    <property type="entry name" value="Prot_kinase_dom"/>
</dbReference>
<dbReference type="InterPro" id="IPR017441">
    <property type="entry name" value="Protein_kinase_ATP_BS"/>
</dbReference>
<dbReference type="InterPro" id="IPR050122">
    <property type="entry name" value="RTK"/>
</dbReference>
<dbReference type="InterPro" id="IPR001245">
    <property type="entry name" value="Ser-Thr/Tyr_kinase_cat_dom"/>
</dbReference>
<dbReference type="InterPro" id="IPR008266">
    <property type="entry name" value="Tyr_kinase_AS"/>
</dbReference>
<dbReference type="InterPro" id="IPR020635">
    <property type="entry name" value="Tyr_kinase_cat_dom"/>
</dbReference>
<dbReference type="PANTHER" id="PTHR24416:SF131">
    <property type="entry name" value="FIBROBLAST GROWTH FACTOR RECEPTOR 1"/>
    <property type="match status" value="1"/>
</dbReference>
<dbReference type="PANTHER" id="PTHR24416">
    <property type="entry name" value="TYROSINE-PROTEIN KINASE RECEPTOR"/>
    <property type="match status" value="1"/>
</dbReference>
<dbReference type="Pfam" id="PF07679">
    <property type="entry name" value="I-set"/>
    <property type="match status" value="1"/>
</dbReference>
<dbReference type="Pfam" id="PF00047">
    <property type="entry name" value="ig"/>
    <property type="match status" value="1"/>
</dbReference>
<dbReference type="Pfam" id="PF13927">
    <property type="entry name" value="Ig_3"/>
    <property type="match status" value="1"/>
</dbReference>
<dbReference type="Pfam" id="PF07714">
    <property type="entry name" value="PK_Tyr_Ser-Thr"/>
    <property type="match status" value="1"/>
</dbReference>
<dbReference type="PIRSF" id="PIRSF000628">
    <property type="entry name" value="FGFR"/>
    <property type="match status" value="1"/>
</dbReference>
<dbReference type="PRINTS" id="PR00109">
    <property type="entry name" value="TYRKINASE"/>
</dbReference>
<dbReference type="SMART" id="SM00409">
    <property type="entry name" value="IG"/>
    <property type="match status" value="3"/>
</dbReference>
<dbReference type="SMART" id="SM00408">
    <property type="entry name" value="IGc2"/>
    <property type="match status" value="3"/>
</dbReference>
<dbReference type="SMART" id="SM00219">
    <property type="entry name" value="TyrKc"/>
    <property type="match status" value="1"/>
</dbReference>
<dbReference type="SUPFAM" id="SSF48726">
    <property type="entry name" value="Immunoglobulin"/>
    <property type="match status" value="3"/>
</dbReference>
<dbReference type="SUPFAM" id="SSF56112">
    <property type="entry name" value="Protein kinase-like (PK-like)"/>
    <property type="match status" value="1"/>
</dbReference>
<dbReference type="PROSITE" id="PS50835">
    <property type="entry name" value="IG_LIKE"/>
    <property type="match status" value="3"/>
</dbReference>
<dbReference type="PROSITE" id="PS00107">
    <property type="entry name" value="PROTEIN_KINASE_ATP"/>
    <property type="match status" value="1"/>
</dbReference>
<dbReference type="PROSITE" id="PS50011">
    <property type="entry name" value="PROTEIN_KINASE_DOM"/>
    <property type="match status" value="1"/>
</dbReference>
<dbReference type="PROSITE" id="PS00109">
    <property type="entry name" value="PROTEIN_KINASE_TYR"/>
    <property type="match status" value="1"/>
</dbReference>
<feature type="signal peptide" evidence="2">
    <location>
        <begin position="1"/>
        <end position="23"/>
    </location>
</feature>
<feature type="chain" id="PRO_0000249216" description="Fibroblast growth factor receptor 1">
    <location>
        <begin position="24"/>
        <end position="816"/>
    </location>
</feature>
<feature type="topological domain" description="Extracellular" evidence="2">
    <location>
        <begin position="24"/>
        <end position="374"/>
    </location>
</feature>
<feature type="transmembrane region" description="Helical" evidence="2">
    <location>
        <begin position="375"/>
        <end position="395"/>
    </location>
</feature>
<feature type="topological domain" description="Cytoplasmic" evidence="2">
    <location>
        <begin position="396"/>
        <end position="816"/>
    </location>
</feature>
<feature type="domain" description="Ig-like C2-type 1">
    <location>
        <begin position="25"/>
        <end position="118"/>
    </location>
</feature>
<feature type="domain" description="Ig-like C2-type 2">
    <location>
        <begin position="156"/>
        <end position="244"/>
    </location>
</feature>
<feature type="domain" description="Ig-like C2-type 3">
    <location>
        <begin position="253"/>
        <end position="355"/>
    </location>
</feature>
<feature type="domain" description="Protein kinase" evidence="4">
    <location>
        <begin position="474"/>
        <end position="763"/>
    </location>
</feature>
<feature type="region of interest" description="Disordered" evidence="6">
    <location>
        <begin position="118"/>
        <end position="152"/>
    </location>
</feature>
<feature type="region of interest" description="Disordered" evidence="6">
    <location>
        <begin position="776"/>
        <end position="816"/>
    </location>
</feature>
<feature type="compositionally biased region" description="Basic and acidic residues" evidence="6">
    <location>
        <begin position="133"/>
        <end position="143"/>
    </location>
</feature>
<feature type="compositionally biased region" description="Polar residues" evidence="6">
    <location>
        <begin position="779"/>
        <end position="788"/>
    </location>
</feature>
<feature type="active site" description="Proton acceptor" evidence="4 5">
    <location>
        <position position="619"/>
    </location>
</feature>
<feature type="binding site" evidence="4">
    <location>
        <begin position="480"/>
        <end position="486"/>
    </location>
    <ligand>
        <name>ATP</name>
        <dbReference type="ChEBI" id="CHEBI:30616"/>
    </ligand>
</feature>
<feature type="binding site" evidence="4">
    <location>
        <position position="510"/>
    </location>
    <ligand>
        <name>ATP</name>
        <dbReference type="ChEBI" id="CHEBI:30616"/>
    </ligand>
</feature>
<feature type="binding site" evidence="4">
    <location>
        <begin position="558"/>
        <end position="560"/>
    </location>
    <ligand>
        <name>ATP</name>
        <dbReference type="ChEBI" id="CHEBI:30616"/>
    </ligand>
</feature>
<feature type="binding site" evidence="4">
    <location>
        <position position="564"/>
    </location>
    <ligand>
        <name>ATP</name>
        <dbReference type="ChEBI" id="CHEBI:30616"/>
    </ligand>
</feature>
<feature type="binding site" evidence="4">
    <location>
        <position position="623"/>
    </location>
    <ligand>
        <name>ATP</name>
        <dbReference type="ChEBI" id="CHEBI:30616"/>
    </ligand>
</feature>
<feature type="binding site" evidence="4">
    <location>
        <position position="637"/>
    </location>
    <ligand>
        <name>ATP</name>
        <dbReference type="ChEBI" id="CHEBI:30616"/>
    </ligand>
</feature>
<feature type="modified residue" description="Phosphotyrosine; by autocatalysis" evidence="1">
    <location>
        <position position="459"/>
    </location>
</feature>
<feature type="modified residue" description="Phosphotyrosine; by autocatalysis" evidence="1">
    <location>
        <position position="579"/>
    </location>
</feature>
<feature type="modified residue" description="Phosphotyrosine; by autocatalysis" evidence="1">
    <location>
        <position position="581"/>
    </location>
</feature>
<feature type="modified residue" description="Phosphotyrosine; by autocatalysis" evidence="1">
    <location>
        <position position="649"/>
    </location>
</feature>
<feature type="modified residue" description="Phosphotyrosine; by autocatalysis" evidence="1">
    <location>
        <position position="650"/>
    </location>
</feature>
<feature type="modified residue" description="Phosphotyrosine; by autocatalysis" evidence="1">
    <location>
        <position position="726"/>
    </location>
</feature>
<feature type="modified residue" description="Phosphotyrosine; by autocatalysis" evidence="1">
    <location>
        <position position="762"/>
    </location>
</feature>
<feature type="glycosylation site" description="N-linked (GlcNAc...) asparagine" evidence="2">
    <location>
        <position position="76"/>
    </location>
</feature>
<feature type="glycosylation site" description="N-linked (GlcNAc...) asparagine" evidence="2">
    <location>
        <position position="116"/>
    </location>
</feature>
<feature type="glycosylation site" description="N-linked (GlcNAc...) asparagine" evidence="2">
    <location>
        <position position="238"/>
    </location>
</feature>
<feature type="glycosylation site" description="N-linked (GlcNAc...) asparagine" evidence="2">
    <location>
        <position position="262"/>
    </location>
</feature>
<feature type="glycosylation site" description="N-linked (GlcNAc...) asparagine" evidence="2">
    <location>
        <position position="294"/>
    </location>
</feature>
<feature type="glycosylation site" description="N-linked (GlcNAc...) asparagine" evidence="2">
    <location>
        <position position="315"/>
    </location>
</feature>
<feature type="glycosylation site" description="N-linked (GlcNAc...) asparagine" evidence="2">
    <location>
        <position position="328"/>
    </location>
</feature>
<feature type="disulfide bond" evidence="3">
    <location>
        <begin position="54"/>
        <end position="100"/>
    </location>
</feature>
<feature type="disulfide bond" evidence="3">
    <location>
        <begin position="176"/>
        <end position="228"/>
    </location>
</feature>
<feature type="disulfide bond" evidence="3">
    <location>
        <begin position="275"/>
        <end position="339"/>
    </location>
</feature>
<name>FGFR1_PLEWA</name>